<comment type="function">
    <text evidence="1">Catalyzes the ATP-dependent 2-thiolation of cytidine in position 32 of tRNA, to form 2-thiocytidine (s(2)C32). The sulfur atoms are provided by the cysteine/cysteine desulfurase (IscS) system.</text>
</comment>
<comment type="catalytic activity">
    <reaction evidence="1">
        <text>cytidine(32) in tRNA + S-sulfanyl-L-cysteinyl-[cysteine desulfurase] + AH2 + ATP = 2-thiocytidine(32) in tRNA + L-cysteinyl-[cysteine desulfurase] + A + AMP + diphosphate + H(+)</text>
        <dbReference type="Rhea" id="RHEA:57048"/>
        <dbReference type="Rhea" id="RHEA-COMP:10288"/>
        <dbReference type="Rhea" id="RHEA-COMP:12157"/>
        <dbReference type="Rhea" id="RHEA-COMP:12158"/>
        <dbReference type="Rhea" id="RHEA-COMP:14821"/>
        <dbReference type="ChEBI" id="CHEBI:13193"/>
        <dbReference type="ChEBI" id="CHEBI:15378"/>
        <dbReference type="ChEBI" id="CHEBI:17499"/>
        <dbReference type="ChEBI" id="CHEBI:29950"/>
        <dbReference type="ChEBI" id="CHEBI:30616"/>
        <dbReference type="ChEBI" id="CHEBI:33019"/>
        <dbReference type="ChEBI" id="CHEBI:61963"/>
        <dbReference type="ChEBI" id="CHEBI:82748"/>
        <dbReference type="ChEBI" id="CHEBI:141453"/>
        <dbReference type="ChEBI" id="CHEBI:456215"/>
    </reaction>
    <physiologicalReaction direction="left-to-right" evidence="1">
        <dbReference type="Rhea" id="RHEA:57049"/>
    </physiologicalReaction>
</comment>
<comment type="cofactor">
    <cofactor evidence="1">
        <name>Mg(2+)</name>
        <dbReference type="ChEBI" id="CHEBI:18420"/>
    </cofactor>
</comment>
<comment type="cofactor">
    <cofactor evidence="1">
        <name>[4Fe-4S] cluster</name>
        <dbReference type="ChEBI" id="CHEBI:49883"/>
    </cofactor>
    <text evidence="1">Binds 1 [4Fe-4S] cluster per subunit. The cluster is chelated by three Cys residues, the fourth Fe has a free coordination site that may bind a sulfur atom transferred from the persulfide of IscS.</text>
</comment>
<comment type="pathway">
    <text evidence="1">tRNA modification.</text>
</comment>
<comment type="subunit">
    <text evidence="1">Homodimer.</text>
</comment>
<comment type="subcellular location">
    <subcellularLocation>
        <location evidence="1">Cytoplasm</location>
    </subcellularLocation>
</comment>
<comment type="miscellaneous">
    <text evidence="1">The thiolation reaction likely consists of two steps: a first activation step by ATP to form an adenylated intermediate of the target base of tRNA, and a second nucleophilic substitution step of the sulfur (S) atom supplied by the hydrosulfide attached to the Fe-S cluster.</text>
</comment>
<comment type="similarity">
    <text evidence="1">Belongs to the TtcA family.</text>
</comment>
<name>TTCA_XANAC</name>
<keyword id="KW-0004">4Fe-4S</keyword>
<keyword id="KW-0067">ATP-binding</keyword>
<keyword id="KW-0963">Cytoplasm</keyword>
<keyword id="KW-0408">Iron</keyword>
<keyword id="KW-0411">Iron-sulfur</keyword>
<keyword id="KW-0460">Magnesium</keyword>
<keyword id="KW-0479">Metal-binding</keyword>
<keyword id="KW-0547">Nucleotide-binding</keyword>
<keyword id="KW-0694">RNA-binding</keyword>
<keyword id="KW-0808">Transferase</keyword>
<keyword id="KW-0819">tRNA processing</keyword>
<keyword id="KW-0820">tRNA-binding</keyword>
<reference key="1">
    <citation type="journal article" date="2002" name="Nature">
        <title>Comparison of the genomes of two Xanthomonas pathogens with differing host specificities.</title>
        <authorList>
            <person name="da Silva A.C.R."/>
            <person name="Ferro J.A."/>
            <person name="Reinach F.C."/>
            <person name="Farah C.S."/>
            <person name="Furlan L.R."/>
            <person name="Quaggio R.B."/>
            <person name="Monteiro-Vitorello C.B."/>
            <person name="Van Sluys M.A."/>
            <person name="Almeida N.F. Jr."/>
            <person name="Alves L.M.C."/>
            <person name="do Amaral A.M."/>
            <person name="Bertolini M.C."/>
            <person name="Camargo L.E.A."/>
            <person name="Camarotte G."/>
            <person name="Cannavan F."/>
            <person name="Cardozo J."/>
            <person name="Chambergo F."/>
            <person name="Ciapina L.P."/>
            <person name="Cicarelli R.M.B."/>
            <person name="Coutinho L.L."/>
            <person name="Cursino-Santos J.R."/>
            <person name="El-Dorry H."/>
            <person name="Faria J.B."/>
            <person name="Ferreira A.J.S."/>
            <person name="Ferreira R.C.C."/>
            <person name="Ferro M.I.T."/>
            <person name="Formighieri E.F."/>
            <person name="Franco M.C."/>
            <person name="Greggio C.C."/>
            <person name="Gruber A."/>
            <person name="Katsuyama A.M."/>
            <person name="Kishi L.T."/>
            <person name="Leite R.P."/>
            <person name="Lemos E.G.M."/>
            <person name="Lemos M.V.F."/>
            <person name="Locali E.C."/>
            <person name="Machado M.A."/>
            <person name="Madeira A.M.B.N."/>
            <person name="Martinez-Rossi N.M."/>
            <person name="Martins E.C."/>
            <person name="Meidanis J."/>
            <person name="Menck C.F.M."/>
            <person name="Miyaki C.Y."/>
            <person name="Moon D.H."/>
            <person name="Moreira L.M."/>
            <person name="Novo M.T.M."/>
            <person name="Okura V.K."/>
            <person name="Oliveira M.C."/>
            <person name="Oliveira V.R."/>
            <person name="Pereira H.A."/>
            <person name="Rossi A."/>
            <person name="Sena J.A.D."/>
            <person name="Silva C."/>
            <person name="de Souza R.F."/>
            <person name="Spinola L.A.F."/>
            <person name="Takita M.A."/>
            <person name="Tamura R.E."/>
            <person name="Teixeira E.C."/>
            <person name="Tezza R.I.D."/>
            <person name="Trindade dos Santos M."/>
            <person name="Truffi D."/>
            <person name="Tsai S.M."/>
            <person name="White F.F."/>
            <person name="Setubal J.C."/>
            <person name="Kitajima J.P."/>
        </authorList>
    </citation>
    <scope>NUCLEOTIDE SEQUENCE [LARGE SCALE GENOMIC DNA]</scope>
    <source>
        <strain>306</strain>
    </source>
</reference>
<feature type="chain" id="PRO_0000348868" description="tRNA-cytidine(32) 2-sulfurtransferase">
    <location>
        <begin position="1"/>
        <end position="305"/>
    </location>
</feature>
<feature type="region of interest" description="Disordered" evidence="2">
    <location>
        <begin position="1"/>
        <end position="20"/>
    </location>
</feature>
<feature type="region of interest" description="Disordered" evidence="2">
    <location>
        <begin position="282"/>
        <end position="305"/>
    </location>
</feature>
<feature type="short sequence motif" description="PP-loop motif" evidence="1">
    <location>
        <begin position="59"/>
        <end position="64"/>
    </location>
</feature>
<feature type="binding site" evidence="1">
    <location>
        <position position="134"/>
    </location>
    <ligand>
        <name>[4Fe-4S] cluster</name>
        <dbReference type="ChEBI" id="CHEBI:49883"/>
    </ligand>
</feature>
<feature type="binding site" evidence="1">
    <location>
        <position position="137"/>
    </location>
    <ligand>
        <name>[4Fe-4S] cluster</name>
        <dbReference type="ChEBI" id="CHEBI:49883"/>
    </ligand>
</feature>
<feature type="binding site" evidence="1">
    <location>
        <position position="225"/>
    </location>
    <ligand>
        <name>[4Fe-4S] cluster</name>
        <dbReference type="ChEBI" id="CHEBI:49883"/>
    </ligand>
</feature>
<protein>
    <recommendedName>
        <fullName evidence="1">tRNA-cytidine(32) 2-sulfurtransferase</fullName>
        <ecNumber evidence="1">2.8.1.-</ecNumber>
    </recommendedName>
    <alternativeName>
        <fullName evidence="1">Two-thiocytidine biosynthesis protein A</fullName>
    </alternativeName>
    <alternativeName>
        <fullName evidence="1">tRNA 2-thiocytidine biosynthesis protein TtcA</fullName>
    </alternativeName>
</protein>
<proteinExistence type="inferred from homology"/>
<gene>
    <name evidence="1" type="primary">ttcA</name>
    <name type="ordered locus">XAC4224</name>
</gene>
<organism>
    <name type="scientific">Xanthomonas axonopodis pv. citri (strain 306)</name>
    <dbReference type="NCBI Taxonomy" id="190486"/>
    <lineage>
        <taxon>Bacteria</taxon>
        <taxon>Pseudomonadati</taxon>
        <taxon>Pseudomonadota</taxon>
        <taxon>Gammaproteobacteria</taxon>
        <taxon>Lysobacterales</taxon>
        <taxon>Lysobacteraceae</taxon>
        <taxon>Xanthomonas</taxon>
    </lineage>
</organism>
<sequence>MTAVLPLPQPLADPAPRDPRQRLQREQLRLGKRLQRQVGQAIADFGMIAPGDKIMVCLSGGKDSYTLLDMLLQLQRKAPVPFSLVAVNLDQKQPDFPAHVLPAYLRGLGVPFAIVEQDTYSVVSRVIPAGKTMCSLCSRLRRGALYAYAQTHGVTKIALGHHRDDIVATFFMNLFHHARLAAMAPKLRSDDGAHVVIRPLAYVREADIAAYAQARQFPIIPCNLCGSQENLQRQQVGKLLQQWDRESPGRVEQIARALGDVRPEQLADRTLFDFLALGRSGDAPSGLDPDPRAWLSAGHATHDSD</sequence>
<accession>Q8PEW6</accession>
<evidence type="ECO:0000255" key="1">
    <source>
        <dbReference type="HAMAP-Rule" id="MF_01850"/>
    </source>
</evidence>
<evidence type="ECO:0000256" key="2">
    <source>
        <dbReference type="SAM" id="MobiDB-lite"/>
    </source>
</evidence>
<dbReference type="EC" id="2.8.1.-" evidence="1"/>
<dbReference type="EMBL" id="AE008923">
    <property type="protein sequence ID" value="AAM39059.1"/>
    <property type="molecule type" value="Genomic_DNA"/>
</dbReference>
<dbReference type="RefSeq" id="WP_011052820.1">
    <property type="nucleotide sequence ID" value="NC_003919.1"/>
</dbReference>
<dbReference type="SMR" id="Q8PEW6"/>
<dbReference type="GeneID" id="66913207"/>
<dbReference type="KEGG" id="xac:XAC4224"/>
<dbReference type="eggNOG" id="COG0037">
    <property type="taxonomic scope" value="Bacteria"/>
</dbReference>
<dbReference type="HOGENOM" id="CLU_026481_0_1_6"/>
<dbReference type="Proteomes" id="UP000000576">
    <property type="component" value="Chromosome"/>
</dbReference>
<dbReference type="GO" id="GO:0005737">
    <property type="term" value="C:cytoplasm"/>
    <property type="evidence" value="ECO:0007669"/>
    <property type="project" value="UniProtKB-SubCell"/>
</dbReference>
<dbReference type="GO" id="GO:0051539">
    <property type="term" value="F:4 iron, 4 sulfur cluster binding"/>
    <property type="evidence" value="ECO:0007669"/>
    <property type="project" value="UniProtKB-UniRule"/>
</dbReference>
<dbReference type="GO" id="GO:0005524">
    <property type="term" value="F:ATP binding"/>
    <property type="evidence" value="ECO:0007669"/>
    <property type="project" value="UniProtKB-UniRule"/>
</dbReference>
<dbReference type="GO" id="GO:0000287">
    <property type="term" value="F:magnesium ion binding"/>
    <property type="evidence" value="ECO:0007669"/>
    <property type="project" value="UniProtKB-UniRule"/>
</dbReference>
<dbReference type="GO" id="GO:0016783">
    <property type="term" value="F:sulfurtransferase activity"/>
    <property type="evidence" value="ECO:0007669"/>
    <property type="project" value="UniProtKB-UniRule"/>
</dbReference>
<dbReference type="GO" id="GO:0000049">
    <property type="term" value="F:tRNA binding"/>
    <property type="evidence" value="ECO:0007669"/>
    <property type="project" value="UniProtKB-KW"/>
</dbReference>
<dbReference type="GO" id="GO:0034227">
    <property type="term" value="P:tRNA thio-modification"/>
    <property type="evidence" value="ECO:0007669"/>
    <property type="project" value="UniProtKB-UniRule"/>
</dbReference>
<dbReference type="CDD" id="cd24138">
    <property type="entry name" value="TtcA-like"/>
    <property type="match status" value="1"/>
</dbReference>
<dbReference type="Gene3D" id="3.40.50.620">
    <property type="entry name" value="HUPs"/>
    <property type="match status" value="1"/>
</dbReference>
<dbReference type="HAMAP" id="MF_01850">
    <property type="entry name" value="TtcA"/>
    <property type="match status" value="1"/>
</dbReference>
<dbReference type="InterPro" id="IPR014729">
    <property type="entry name" value="Rossmann-like_a/b/a_fold"/>
</dbReference>
<dbReference type="InterPro" id="IPR011063">
    <property type="entry name" value="TilS/TtcA_N"/>
</dbReference>
<dbReference type="InterPro" id="IPR012089">
    <property type="entry name" value="tRNA_Cyd_32_2_STrfase"/>
</dbReference>
<dbReference type="InterPro" id="IPR035107">
    <property type="entry name" value="tRNA_thiolation_TtcA_Ctu1"/>
</dbReference>
<dbReference type="NCBIfam" id="NF007972">
    <property type="entry name" value="PRK10696.1"/>
    <property type="match status" value="1"/>
</dbReference>
<dbReference type="PANTHER" id="PTHR43686:SF1">
    <property type="entry name" value="AMINOTRAN_5 DOMAIN-CONTAINING PROTEIN"/>
    <property type="match status" value="1"/>
</dbReference>
<dbReference type="PANTHER" id="PTHR43686">
    <property type="entry name" value="SULFURTRANSFERASE-RELATED"/>
    <property type="match status" value="1"/>
</dbReference>
<dbReference type="Pfam" id="PF01171">
    <property type="entry name" value="ATP_bind_3"/>
    <property type="match status" value="1"/>
</dbReference>
<dbReference type="PIRSF" id="PIRSF004976">
    <property type="entry name" value="ATPase_YdaO"/>
    <property type="match status" value="1"/>
</dbReference>
<dbReference type="SUPFAM" id="SSF52402">
    <property type="entry name" value="Adenine nucleotide alpha hydrolases-like"/>
    <property type="match status" value="1"/>
</dbReference>